<accession>Q55971</accession>
<organism>
    <name type="scientific">Synechocystis sp. (strain ATCC 27184 / PCC 6803 / Kazusa)</name>
    <dbReference type="NCBI Taxonomy" id="1111708"/>
    <lineage>
        <taxon>Bacteria</taxon>
        <taxon>Bacillati</taxon>
        <taxon>Cyanobacteriota</taxon>
        <taxon>Cyanophyceae</taxon>
        <taxon>Synechococcales</taxon>
        <taxon>Merismopediaceae</taxon>
        <taxon>Synechocystis</taxon>
    </lineage>
</organism>
<proteinExistence type="inferred from homology"/>
<reference key="1">
    <citation type="journal article" date="1995" name="DNA Res.">
        <title>Sequence analysis of the genome of the unicellular cyanobacterium Synechocystis sp. strain PCC6803. I. Sequence features in the 1 Mb region from map positions 64% to 92% of the genome.</title>
        <authorList>
            <person name="Kaneko T."/>
            <person name="Tanaka A."/>
            <person name="Sato S."/>
            <person name="Kotani H."/>
            <person name="Sazuka T."/>
            <person name="Miyajima N."/>
            <person name="Sugiura M."/>
            <person name="Tabata S."/>
        </authorList>
    </citation>
    <scope>NUCLEOTIDE SEQUENCE [LARGE SCALE GENOMIC DNA]</scope>
    <source>
        <strain>ATCC 27184 / PCC 6803 / N-1</strain>
    </source>
</reference>
<reference key="2">
    <citation type="journal article" date="1996" name="DNA Res.">
        <title>Sequence analysis of the genome of the unicellular cyanobacterium Synechocystis sp. strain PCC6803. II. Sequence determination of the entire genome and assignment of potential protein-coding regions.</title>
        <authorList>
            <person name="Kaneko T."/>
            <person name="Sato S."/>
            <person name="Kotani H."/>
            <person name="Tanaka A."/>
            <person name="Asamizu E."/>
            <person name="Nakamura Y."/>
            <person name="Miyajima N."/>
            <person name="Hirosawa M."/>
            <person name="Sugiura M."/>
            <person name="Sasamoto S."/>
            <person name="Kimura T."/>
            <person name="Hosouchi T."/>
            <person name="Matsuno A."/>
            <person name="Muraki A."/>
            <person name="Nakazaki N."/>
            <person name="Naruo K."/>
            <person name="Okumura S."/>
            <person name="Shimpo S."/>
            <person name="Takeuchi C."/>
            <person name="Wada T."/>
            <person name="Watanabe A."/>
            <person name="Yamada M."/>
            <person name="Yasuda M."/>
            <person name="Tabata S."/>
        </authorList>
    </citation>
    <scope>NUCLEOTIDE SEQUENCE [LARGE SCALE GENOMIC DNA]</scope>
    <source>
        <strain>ATCC 27184 / PCC 6803 / Kazusa</strain>
    </source>
</reference>
<gene>
    <name type="primary">polA</name>
    <name type="ordered locus">slr0707</name>
</gene>
<dbReference type="EC" id="2.7.7.7"/>
<dbReference type="EMBL" id="BA000022">
    <property type="protein sequence ID" value="BAA10748.1"/>
    <property type="molecule type" value="Genomic_DNA"/>
</dbReference>
<dbReference type="PIR" id="S77056">
    <property type="entry name" value="S77056"/>
</dbReference>
<dbReference type="SMR" id="Q55971"/>
<dbReference type="FunCoup" id="Q55971">
    <property type="interactions" value="274"/>
</dbReference>
<dbReference type="IntAct" id="Q55971">
    <property type="interactions" value="3"/>
</dbReference>
<dbReference type="STRING" id="1148.gene:10500252"/>
<dbReference type="PaxDb" id="1148-1006595"/>
<dbReference type="EnsemblBacteria" id="BAA10748">
    <property type="protein sequence ID" value="BAA10748"/>
    <property type="gene ID" value="BAA10748"/>
</dbReference>
<dbReference type="KEGG" id="syn:slr0707"/>
<dbReference type="eggNOG" id="COG0258">
    <property type="taxonomic scope" value="Bacteria"/>
</dbReference>
<dbReference type="eggNOG" id="COG0749">
    <property type="taxonomic scope" value="Bacteria"/>
</dbReference>
<dbReference type="InParanoid" id="Q55971"/>
<dbReference type="PhylomeDB" id="Q55971"/>
<dbReference type="Proteomes" id="UP000001425">
    <property type="component" value="Chromosome"/>
</dbReference>
<dbReference type="GO" id="GO:0008408">
    <property type="term" value="F:3'-5' exonuclease activity"/>
    <property type="evidence" value="ECO:0007669"/>
    <property type="project" value="InterPro"/>
</dbReference>
<dbReference type="GO" id="GO:0008409">
    <property type="term" value="F:5'-3' exonuclease activity"/>
    <property type="evidence" value="ECO:0007669"/>
    <property type="project" value="InterPro"/>
</dbReference>
<dbReference type="GO" id="GO:0003677">
    <property type="term" value="F:DNA binding"/>
    <property type="evidence" value="ECO:0007669"/>
    <property type="project" value="UniProtKB-KW"/>
</dbReference>
<dbReference type="GO" id="GO:0003887">
    <property type="term" value="F:DNA-directed DNA polymerase activity"/>
    <property type="evidence" value="ECO:0000318"/>
    <property type="project" value="GO_Central"/>
</dbReference>
<dbReference type="GO" id="GO:0006261">
    <property type="term" value="P:DNA-templated DNA replication"/>
    <property type="evidence" value="ECO:0007669"/>
    <property type="project" value="InterPro"/>
</dbReference>
<dbReference type="GO" id="GO:0006302">
    <property type="term" value="P:double-strand break repair"/>
    <property type="evidence" value="ECO:0000318"/>
    <property type="project" value="GO_Central"/>
</dbReference>
<dbReference type="CDD" id="cd08637">
    <property type="entry name" value="DNA_pol_A_pol_I_C"/>
    <property type="match status" value="1"/>
</dbReference>
<dbReference type="CDD" id="cd06139">
    <property type="entry name" value="DNA_polA_I_Ecoli_like_exo"/>
    <property type="match status" value="1"/>
</dbReference>
<dbReference type="CDD" id="cd09898">
    <property type="entry name" value="H3TH_53EXO"/>
    <property type="match status" value="1"/>
</dbReference>
<dbReference type="CDD" id="cd09859">
    <property type="entry name" value="PIN_53EXO"/>
    <property type="match status" value="1"/>
</dbReference>
<dbReference type="FunFam" id="1.10.150.20:FF:000003">
    <property type="entry name" value="DNA polymerase I"/>
    <property type="match status" value="1"/>
</dbReference>
<dbReference type="FunFam" id="1.20.1060.10:FF:000001">
    <property type="entry name" value="DNA polymerase I"/>
    <property type="match status" value="1"/>
</dbReference>
<dbReference type="FunFam" id="3.40.50.1010:FF:000001">
    <property type="entry name" value="DNA polymerase I"/>
    <property type="match status" value="1"/>
</dbReference>
<dbReference type="Gene3D" id="3.30.70.370">
    <property type="match status" value="1"/>
</dbReference>
<dbReference type="Gene3D" id="1.10.150.20">
    <property type="entry name" value="5' to 3' exonuclease, C-terminal subdomain"/>
    <property type="match status" value="2"/>
</dbReference>
<dbReference type="Gene3D" id="3.40.50.1010">
    <property type="entry name" value="5'-nuclease"/>
    <property type="match status" value="1"/>
</dbReference>
<dbReference type="Gene3D" id="3.30.420.10">
    <property type="entry name" value="Ribonuclease H-like superfamily/Ribonuclease H"/>
    <property type="match status" value="1"/>
</dbReference>
<dbReference type="Gene3D" id="1.20.1060.10">
    <property type="entry name" value="Taq DNA Polymerase, Chain T, domain 4"/>
    <property type="match status" value="1"/>
</dbReference>
<dbReference type="InterPro" id="IPR002562">
    <property type="entry name" value="3'-5'_exonuclease_dom"/>
</dbReference>
<dbReference type="InterPro" id="IPR020046">
    <property type="entry name" value="5-3_exonucl_a-hlix_arch_N"/>
</dbReference>
<dbReference type="InterPro" id="IPR002421">
    <property type="entry name" value="5-3_exonuclease"/>
</dbReference>
<dbReference type="InterPro" id="IPR036279">
    <property type="entry name" value="5-3_exonuclease_C_sf"/>
</dbReference>
<dbReference type="InterPro" id="IPR001098">
    <property type="entry name" value="DNA-dir_DNA_pol_A_palm_dom"/>
</dbReference>
<dbReference type="InterPro" id="IPR043502">
    <property type="entry name" value="DNA/RNA_pol_sf"/>
</dbReference>
<dbReference type="InterPro" id="IPR020045">
    <property type="entry name" value="DNA_polI_H3TH"/>
</dbReference>
<dbReference type="InterPro" id="IPR018320">
    <property type="entry name" value="DNA_polymerase_1"/>
</dbReference>
<dbReference type="InterPro" id="IPR002298">
    <property type="entry name" value="DNA_polymerase_A"/>
</dbReference>
<dbReference type="InterPro" id="IPR008918">
    <property type="entry name" value="HhH2"/>
</dbReference>
<dbReference type="InterPro" id="IPR029060">
    <property type="entry name" value="PIN-like_dom_sf"/>
</dbReference>
<dbReference type="InterPro" id="IPR012337">
    <property type="entry name" value="RNaseH-like_sf"/>
</dbReference>
<dbReference type="InterPro" id="IPR036397">
    <property type="entry name" value="RNaseH_sf"/>
</dbReference>
<dbReference type="NCBIfam" id="TIGR00593">
    <property type="entry name" value="pola"/>
    <property type="match status" value="1"/>
</dbReference>
<dbReference type="NCBIfam" id="NF004397">
    <property type="entry name" value="PRK05755.1"/>
    <property type="match status" value="1"/>
</dbReference>
<dbReference type="PANTHER" id="PTHR10133">
    <property type="entry name" value="DNA POLYMERASE I"/>
    <property type="match status" value="1"/>
</dbReference>
<dbReference type="PANTHER" id="PTHR10133:SF27">
    <property type="entry name" value="DNA POLYMERASE NU"/>
    <property type="match status" value="1"/>
</dbReference>
<dbReference type="Pfam" id="PF01367">
    <property type="entry name" value="5_3_exonuc"/>
    <property type="match status" value="1"/>
</dbReference>
<dbReference type="Pfam" id="PF02739">
    <property type="entry name" value="5_3_exonuc_N"/>
    <property type="match status" value="1"/>
</dbReference>
<dbReference type="Pfam" id="PF00476">
    <property type="entry name" value="DNA_pol_A"/>
    <property type="match status" value="1"/>
</dbReference>
<dbReference type="Pfam" id="PF01612">
    <property type="entry name" value="DNA_pol_A_exo1"/>
    <property type="match status" value="1"/>
</dbReference>
<dbReference type="PRINTS" id="PR00868">
    <property type="entry name" value="DNAPOLI"/>
</dbReference>
<dbReference type="SMART" id="SM00474">
    <property type="entry name" value="35EXOc"/>
    <property type="match status" value="1"/>
</dbReference>
<dbReference type="SMART" id="SM00475">
    <property type="entry name" value="53EXOc"/>
    <property type="match status" value="1"/>
</dbReference>
<dbReference type="SMART" id="SM00279">
    <property type="entry name" value="HhH2"/>
    <property type="match status" value="1"/>
</dbReference>
<dbReference type="SMART" id="SM00482">
    <property type="entry name" value="POLAc"/>
    <property type="match status" value="1"/>
</dbReference>
<dbReference type="SUPFAM" id="SSF47807">
    <property type="entry name" value="5' to 3' exonuclease, C-terminal subdomain"/>
    <property type="match status" value="1"/>
</dbReference>
<dbReference type="SUPFAM" id="SSF56672">
    <property type="entry name" value="DNA/RNA polymerases"/>
    <property type="match status" value="1"/>
</dbReference>
<dbReference type="SUPFAM" id="SSF88723">
    <property type="entry name" value="PIN domain-like"/>
    <property type="match status" value="1"/>
</dbReference>
<dbReference type="SUPFAM" id="SSF53098">
    <property type="entry name" value="Ribonuclease H-like"/>
    <property type="match status" value="1"/>
</dbReference>
<protein>
    <recommendedName>
        <fullName>DNA polymerase I</fullName>
        <shortName>POL I</shortName>
        <ecNumber>2.7.7.7</ecNumber>
    </recommendedName>
</protein>
<comment type="function">
    <text evidence="1">In addition to polymerase activity, this DNA polymerase exhibits 3'-5' and 5'-3' exonuclease activity.</text>
</comment>
<comment type="catalytic activity">
    <reaction>
        <text>DNA(n) + a 2'-deoxyribonucleoside 5'-triphosphate = DNA(n+1) + diphosphate</text>
        <dbReference type="Rhea" id="RHEA:22508"/>
        <dbReference type="Rhea" id="RHEA-COMP:17339"/>
        <dbReference type="Rhea" id="RHEA-COMP:17340"/>
        <dbReference type="ChEBI" id="CHEBI:33019"/>
        <dbReference type="ChEBI" id="CHEBI:61560"/>
        <dbReference type="ChEBI" id="CHEBI:173112"/>
        <dbReference type="EC" id="2.7.7.7"/>
    </reaction>
</comment>
<comment type="subunit">
    <text evidence="1">Single-chain monomer with multiple functions.</text>
</comment>
<comment type="similarity">
    <text evidence="3">Belongs to the DNA polymerase type-A family.</text>
</comment>
<name>DPO1_SYNY3</name>
<keyword id="KW-0227">DNA damage</keyword>
<keyword id="KW-0234">DNA repair</keyword>
<keyword id="KW-0235">DNA replication</keyword>
<keyword id="KW-0238">DNA-binding</keyword>
<keyword id="KW-0239">DNA-directed DNA polymerase</keyword>
<keyword id="KW-0269">Exonuclease</keyword>
<keyword id="KW-0378">Hydrolase</keyword>
<keyword id="KW-0540">Nuclease</keyword>
<keyword id="KW-0548">Nucleotidyltransferase</keyword>
<keyword id="KW-1185">Reference proteome</keyword>
<keyword id="KW-0808">Transferase</keyword>
<evidence type="ECO:0000250" key="1"/>
<evidence type="ECO:0000256" key="2">
    <source>
        <dbReference type="SAM" id="MobiDB-lite"/>
    </source>
</evidence>
<evidence type="ECO:0000305" key="3"/>
<feature type="chain" id="PRO_0000101255" description="DNA polymerase I">
    <location>
        <begin position="1"/>
        <end position="986"/>
    </location>
</feature>
<feature type="domain" description="5'-3' exonuclease">
    <location>
        <begin position="1"/>
        <end position="303"/>
    </location>
</feature>
<feature type="domain" description="3'-5' exonuclease">
    <location>
        <begin position="304"/>
        <end position="592"/>
    </location>
</feature>
<feature type="region of interest" description="Disordered" evidence="2">
    <location>
        <begin position="308"/>
        <end position="327"/>
    </location>
</feature>
<feature type="region of interest" description="Polymerase">
    <location>
        <begin position="593"/>
        <end position="986"/>
    </location>
</feature>
<sequence>MFMSAKSPLLLLVDGHSLAFRAYYAFGLSKKGPLRTTAGIPTSVCFGFLNSLMQVMESQKPAAIAIAFDRREPTFRHEADGAYKSNRQETPEDFAEDLSYLQQLLEALNLQTITYAGYEADDILGTLACQGSDAGYQVKILSGDRDLFQLVSPEKNISVLYLTRNPFSSNTGYDELDWQGVVDKMGVTPAQIVDFKALCGDKSDCIPGINGIGEKTAIKLLAEYETLEKVYENLAQIKGALKTRLDNGKDDAMHSQMLARIVVDVPLPVTWEDLQLTGFSTDRLVPLLEKLELRTFIDKIQAFHRNFSDNQSPVPMGNEADNGEPKKTVKAKKSKEKVNPDDSQQLSLFDGVPVVNQEDGLITIQLPKQIQPQIITTIAQLEALVEELKKHTDADFPVAWDTETDSLDPLVANLVGIGCAWGQEPNQVAYIPLKHHQGEQLSLGIIKDLLGEILGNAIYPKVLQNAKFDRRVLAHHGIELGGVVLDTMLASYVLQPEETHNLTDLCRRYNLGLVALSYKDLGLKKDQTIADLPLETAGQYCGLDCYATYLLASKLQKELDQYPELKEILKEIEQPLEKILAAMEDRGIRIDCDYLQTLSQQLAENLLTIETAAYEAAGESFNLSSPKQLGTILFDKLGLDRKKSRKTKTGYSTDHATLEKLQGDHPIIDAILEHRTLAKLKSTYVDALPELVNGQTQRIHTDFNQAVTSTGRLSSSNPNLQNIPIRSDFSRQIRRAFLPQKDWLLVSADYSQIELRILAHLSQEPVLLQAYGDRQDVHGVTAKLLFGKEDITPAERNLGKTINFGVIYGMGAQRFARETGISAVEGREFIDRYHRTYAQVFDYLETMKLEAIAKGYVTTIVGRRRYFNFVTEALRQLRGKTVTELDLVDVKMNYNDAQLLRSAANAPIQGSSADIIKIAMVKLAKLLESYQTRMLLQVHDELIFEMPPEEWEELAPLIQNTMEQALTLSVPLVVEMHRGSNWMEAK</sequence>